<dbReference type="EMBL" id="AF518411">
    <property type="protein sequence ID" value="AAM69350.1"/>
    <property type="molecule type" value="mRNA"/>
</dbReference>
<dbReference type="EMBL" id="JAAUHK010000195">
    <property type="protein sequence ID" value="KAF4640093.1"/>
    <property type="molecule type" value="Genomic_DNA"/>
</dbReference>
<dbReference type="SMR" id="Q8MUM2"/>
<dbReference type="SwissPalm" id="Q8MUM2"/>
<dbReference type="VEuPathDB" id="ToxoDB:TGARI_214320"/>
<dbReference type="VEuPathDB" id="ToxoDB:TGCAST_214320"/>
<dbReference type="VEuPathDB" id="ToxoDB:TGCOUG_214320"/>
<dbReference type="VEuPathDB" id="ToxoDB:TGDOM2_214320"/>
<dbReference type="VEuPathDB" id="ToxoDB:TGFOU_214320"/>
<dbReference type="VEuPathDB" id="ToxoDB:TGGT1_214320"/>
<dbReference type="VEuPathDB" id="ToxoDB:TGMAS_214320"/>
<dbReference type="VEuPathDB" id="ToxoDB:TGME49_214320"/>
<dbReference type="VEuPathDB" id="ToxoDB:TGP89_214320"/>
<dbReference type="VEuPathDB" id="ToxoDB:TGPRC2_214320"/>
<dbReference type="VEuPathDB" id="ToxoDB:TGRH88_040180"/>
<dbReference type="VEuPathDB" id="ToxoDB:TGRUB_214320"/>
<dbReference type="VEuPathDB" id="ToxoDB:TGVAND_214320"/>
<dbReference type="VEuPathDB" id="ToxoDB:TGVEG_214320"/>
<dbReference type="OMA" id="WAITASF"/>
<dbReference type="Proteomes" id="UP000557509">
    <property type="component" value="Unassembled WGS sequence"/>
</dbReference>
<dbReference type="GO" id="GO:0005886">
    <property type="term" value="C:plasma membrane"/>
    <property type="evidence" value="ECO:0007669"/>
    <property type="project" value="UniProtKB-SubCell"/>
</dbReference>
<dbReference type="GO" id="GO:0015149">
    <property type="term" value="F:hexose transmembrane transporter activity"/>
    <property type="evidence" value="ECO:0007669"/>
    <property type="project" value="TreeGrafter"/>
</dbReference>
<dbReference type="Gene3D" id="1.20.1250.20">
    <property type="entry name" value="MFS general substrate transporter like domains"/>
    <property type="match status" value="1"/>
</dbReference>
<dbReference type="InterPro" id="IPR045263">
    <property type="entry name" value="GLUT"/>
</dbReference>
<dbReference type="InterPro" id="IPR020846">
    <property type="entry name" value="MFS_dom"/>
</dbReference>
<dbReference type="InterPro" id="IPR005828">
    <property type="entry name" value="MFS_sugar_transport-like"/>
</dbReference>
<dbReference type="InterPro" id="IPR036259">
    <property type="entry name" value="MFS_trans_sf"/>
</dbReference>
<dbReference type="InterPro" id="IPR003663">
    <property type="entry name" value="Sugar/inositol_transpt"/>
</dbReference>
<dbReference type="InterPro" id="IPR005829">
    <property type="entry name" value="Sugar_transporter_CS"/>
</dbReference>
<dbReference type="NCBIfam" id="TIGR00879">
    <property type="entry name" value="SP"/>
    <property type="match status" value="1"/>
</dbReference>
<dbReference type="PANTHER" id="PTHR23503:SF8">
    <property type="entry name" value="FACILITATED GLUCOSE TRANSPORTER PROTEIN 1"/>
    <property type="match status" value="1"/>
</dbReference>
<dbReference type="PANTHER" id="PTHR23503">
    <property type="entry name" value="SOLUTE CARRIER FAMILY 2"/>
    <property type="match status" value="1"/>
</dbReference>
<dbReference type="Pfam" id="PF00083">
    <property type="entry name" value="Sugar_tr"/>
    <property type="match status" value="1"/>
</dbReference>
<dbReference type="PRINTS" id="PR00171">
    <property type="entry name" value="SUGRTRNSPORT"/>
</dbReference>
<dbReference type="SUPFAM" id="SSF103473">
    <property type="entry name" value="MFS general substrate transporter"/>
    <property type="match status" value="1"/>
</dbReference>
<dbReference type="PROSITE" id="PS50850">
    <property type="entry name" value="MFS"/>
    <property type="match status" value="1"/>
</dbReference>
<dbReference type="PROSITE" id="PS00216">
    <property type="entry name" value="SUGAR_TRANSPORT_1"/>
    <property type="match status" value="1"/>
</dbReference>
<dbReference type="PROSITE" id="PS00217">
    <property type="entry name" value="SUGAR_TRANSPORT_2"/>
    <property type="match status" value="1"/>
</dbReference>
<feature type="chain" id="PRO_0000460199" description="Hexose transporter 1">
    <location>
        <begin position="1"/>
        <end position="568"/>
    </location>
</feature>
<feature type="topological domain" description="Cytoplasmic" evidence="7">
    <location>
        <begin position="1"/>
        <end position="32"/>
    </location>
</feature>
<feature type="transmembrane region" description="Helical" evidence="2">
    <location>
        <begin position="33"/>
        <end position="53"/>
    </location>
</feature>
<feature type="topological domain" description="Extracellular" evidence="7">
    <location>
        <begin position="54"/>
        <end position="86"/>
    </location>
</feature>
<feature type="transmembrane region" description="Helical" evidence="2">
    <location>
        <begin position="87"/>
        <end position="107"/>
    </location>
</feature>
<feature type="topological domain" description="Cytoplasmic" evidence="7">
    <location>
        <begin position="108"/>
        <end position="119"/>
    </location>
</feature>
<feature type="transmembrane region" description="Helical" evidence="2">
    <location>
        <begin position="120"/>
        <end position="140"/>
    </location>
</feature>
<feature type="topological domain" description="Extracellular" evidence="7">
    <location>
        <begin position="141"/>
        <end position="142"/>
    </location>
</feature>
<feature type="transmembrane region" description="Helical" evidence="2">
    <location>
        <begin position="143"/>
        <end position="163"/>
    </location>
</feature>
<feature type="topological domain" description="Cytoplasmic" evidence="7">
    <location>
        <begin position="164"/>
        <end position="182"/>
    </location>
</feature>
<feature type="transmembrane region" description="Helical" evidence="2">
    <location>
        <begin position="183"/>
        <end position="203"/>
    </location>
</feature>
<feature type="topological domain" description="Extracellular" evidence="7">
    <location>
        <begin position="204"/>
        <end position="220"/>
    </location>
</feature>
<feature type="transmembrane region" description="Helical" evidence="2">
    <location>
        <begin position="221"/>
        <end position="241"/>
    </location>
</feature>
<feature type="topological domain" description="Cytoplasmic" evidence="7">
    <location>
        <begin position="242"/>
        <end position="306"/>
    </location>
</feature>
<feature type="transmembrane region" description="Helical" evidence="2">
    <location>
        <begin position="307"/>
        <end position="327"/>
    </location>
</feature>
<feature type="topological domain" description="Extracellular" evidence="7">
    <location>
        <begin position="328"/>
        <end position="345"/>
    </location>
</feature>
<feature type="transmembrane region" description="Helical" evidence="2">
    <location>
        <begin position="346"/>
        <end position="366"/>
    </location>
</feature>
<feature type="topological domain" description="Cytoplasmic" evidence="7">
    <location>
        <begin position="367"/>
        <end position="374"/>
    </location>
</feature>
<feature type="transmembrane region" description="Helical" evidence="2">
    <location>
        <begin position="375"/>
        <end position="395"/>
    </location>
</feature>
<feature type="topological domain" description="Extracellular" evidence="7">
    <location>
        <begin position="396"/>
        <end position="406"/>
    </location>
</feature>
<feature type="transmembrane region" description="Helical" evidence="2">
    <location>
        <begin position="407"/>
        <end position="427"/>
    </location>
</feature>
<feature type="topological domain" description="Cytoplasmic" evidence="7">
    <location>
        <begin position="428"/>
        <end position="443"/>
    </location>
</feature>
<feature type="transmembrane region" description="Helical" evidence="2">
    <location>
        <begin position="444"/>
        <end position="464"/>
    </location>
</feature>
<feature type="topological domain" description="Extracellular" evidence="7">
    <location>
        <begin position="465"/>
        <end position="469"/>
    </location>
</feature>
<feature type="transmembrane region" description="Helical" evidence="2">
    <location>
        <begin position="470"/>
        <end position="490"/>
    </location>
</feature>
<feature type="topological domain" description="Cytoplasmic" evidence="4">
    <location>
        <begin position="491"/>
        <end position="568"/>
    </location>
</feature>
<feature type="binding site" evidence="1">
    <location>
        <position position="182"/>
    </location>
    <ligand>
        <name>alpha-D-glucose</name>
        <dbReference type="ChEBI" id="CHEBI:17925"/>
    </ligand>
</feature>
<feature type="binding site" evidence="1">
    <location>
        <position position="182"/>
    </location>
    <ligand>
        <name>beta-D-glucose</name>
        <dbReference type="ChEBI" id="CHEBI:15903"/>
    </ligand>
</feature>
<feature type="binding site" evidence="1">
    <location>
        <position position="318"/>
    </location>
    <ligand>
        <name>alpha-D-glucose</name>
        <dbReference type="ChEBI" id="CHEBI:17925"/>
    </ligand>
</feature>
<feature type="binding site" evidence="1">
    <location>
        <position position="318"/>
    </location>
    <ligand>
        <name>beta-D-glucose</name>
        <dbReference type="ChEBI" id="CHEBI:15903"/>
    </ligand>
</feature>
<feature type="binding site" evidence="1">
    <location>
        <position position="319"/>
    </location>
    <ligand>
        <name>alpha-D-glucose</name>
        <dbReference type="ChEBI" id="CHEBI:17925"/>
    </ligand>
</feature>
<feature type="binding site" evidence="1">
    <location>
        <position position="324"/>
    </location>
    <ligand>
        <name>alpha-D-glucose</name>
        <dbReference type="ChEBI" id="CHEBI:17925"/>
    </ligand>
</feature>
<feature type="binding site" evidence="1">
    <location>
        <position position="324"/>
    </location>
    <ligand>
        <name>beta-D-glucose</name>
        <dbReference type="ChEBI" id="CHEBI:15903"/>
    </ligand>
</feature>
<feature type="binding site" evidence="1">
    <location>
        <position position="355"/>
    </location>
    <ligand>
        <name>beta-D-glucose</name>
        <dbReference type="ChEBI" id="CHEBI:15903"/>
    </ligand>
</feature>
<feature type="binding site" evidence="1">
    <location>
        <position position="426"/>
    </location>
    <ligand>
        <name>alpha-D-glucose</name>
        <dbReference type="ChEBI" id="CHEBI:17925"/>
    </ligand>
</feature>
<feature type="disulfide bond" evidence="1">
    <location>
        <begin position="72"/>
        <end position="83"/>
    </location>
</feature>
<protein>
    <recommendedName>
        <fullName evidence="7">Hexose transporter 1</fullName>
    </recommendedName>
    <alternativeName>
        <fullName evidence="5">Glucose transporter 1</fullName>
        <shortName evidence="5 6">TgGT1</shortName>
    </alternativeName>
</protein>
<gene>
    <name evidence="7" type="primary">GT1</name>
    <name evidence="9" type="ORF">TGRH88_040180</name>
</gene>
<keyword id="KW-1003">Cell membrane</keyword>
<keyword id="KW-1015">Disulfide bond</keyword>
<keyword id="KW-0472">Membrane</keyword>
<keyword id="KW-1185">Reference proteome</keyword>
<keyword id="KW-0762">Sugar transport</keyword>
<keyword id="KW-0812">Transmembrane</keyword>
<keyword id="KW-1133">Transmembrane helix</keyword>
<keyword id="KW-0813">Transport</keyword>
<name>HXT1_TOXGO</name>
<sequence length="568" mass="61688">MATEEMREKSLKREAESLWDIPPESYASKACSCMGTAAQLVMVAVLGSFQFGFNLSALNTSKAFIILDFGWCKDENGGHYSDCDTGLVYGSLINTAVFLGACVGCLLGGRLTDFGRRASLIFTHCVCTLGCILSAAAEGFPTLLIARLVVGVAVGMFTVCVPMYLSEVTPDDRRGYFGTFHQLFITLGIFFGTLLGLAFGNAPAGDEVYEVSTFQQAWWRVMLGLPAVVSLLAIWLLWFVFPFETPQYMVEKKQRAKATALLREIYGRDNVDVEIQRIVTSRYQQKIQRAQQLTVWKAIVHPTYRSVILLACLLSIMQQFTGINVLVANSNNLYSSLKLPQDAVTGLTVGFTALNVFLTVITIPLVDRLGRRTLLLFSEAVMFVAMGIAFVANLVDQSNTAVQWVTVACVYVFIVGFAVGYGPVLWIYIHEIFPPEIKQGAASLASALNWVATVAIVLPSDFLLKQGFSVFVGICTVALAIIFVVTFIFVKETKGLSIEESPYFKGKSRALGSPSAFRMELNSSPSVPLTRGEGAAASAEKGMGLTDAAAMNGGRGVSDDLTKGTEVV</sequence>
<reference evidence="8" key="1">
    <citation type="submission" date="2008-12" db="EMBL/GenBank/DDBJ databases">
        <title>Trafficking of the Toxoplasma gondii glucose transporter is regulated by NSF and Rab11.</title>
        <authorList>
            <person name="Stedman T.T."/>
            <person name="Joiner K.A."/>
        </authorList>
    </citation>
    <scope>NUCLEOTIDE SEQUENCE [MRNA]</scope>
</reference>
<reference evidence="10" key="2">
    <citation type="submission" date="2020-03" db="EMBL/GenBank/DDBJ databases">
        <title>Genome sequence of Toxoplasma gondii RH-88 strain.</title>
        <authorList>
            <person name="Lorenzi H.A."/>
            <person name="Venepally P."/>
            <person name="Rozenberg A."/>
            <person name="Sibley D."/>
        </authorList>
    </citation>
    <scope>NUCLEOTIDE SEQUENCE [LARGE SCALE GENOMIC DNA]</scope>
    <source>
        <strain evidence="10">RH-88</strain>
    </source>
</reference>
<reference evidence="7" key="3">
    <citation type="journal article" date="2002" name="Biochem. J.">
        <title>Comparative characterization of hexose transporters of Plasmodium knowlesi, Plasmodium yoelii and Toxoplasma gondii highlights functional differences within the apicomplexan family.</title>
        <authorList>
            <person name="Joet T."/>
            <person name="Holterman L."/>
            <person name="Stedman T.T."/>
            <person name="Kocken C.H."/>
            <person name="Van Der Wel A."/>
            <person name="Thomas A.W."/>
            <person name="Krishna S."/>
        </authorList>
    </citation>
    <scope>FUNCTION</scope>
    <scope>TRANSPORTER ACTIVITY</scope>
    <scope>ACTIVITY REGULATION</scope>
    <scope>BIOPHYSICOCHEMICAL PROPERTIES</scope>
</reference>
<reference evidence="7" key="4">
    <citation type="journal article" date="2009" name="Proc. Natl. Acad. Sci. U.S.A.">
        <title>Host-derived glucose and its transporter in the obligate intracellular pathogen Toxoplasma gondii are dispensable by glutaminolysis.</title>
        <authorList>
            <person name="Blume M."/>
            <person name="Rodriguez-Contreras D."/>
            <person name="Landfear S."/>
            <person name="Fleige T."/>
            <person name="Soldati-Favre D."/>
            <person name="Lucius R."/>
            <person name="Gupta N."/>
        </authorList>
    </citation>
    <scope>FUNCTION</scope>
    <scope>TRANSPORTER ACTIVITY</scope>
    <scope>SUBCELLULAR LOCATION</scope>
    <scope>DISRUPTION PHENOTYPE</scope>
    <scope>TOPOLOGY</scope>
</reference>
<proteinExistence type="evidence at protein level"/>
<evidence type="ECO:0000250" key="1">
    <source>
        <dbReference type="UniProtKB" id="Q7KWJ5"/>
    </source>
</evidence>
<evidence type="ECO:0000255" key="2"/>
<evidence type="ECO:0000269" key="3">
    <source>
    </source>
</evidence>
<evidence type="ECO:0000269" key="4">
    <source>
    </source>
</evidence>
<evidence type="ECO:0000303" key="5">
    <source>
    </source>
</evidence>
<evidence type="ECO:0000303" key="6">
    <source>
    </source>
</evidence>
<evidence type="ECO:0000305" key="7"/>
<evidence type="ECO:0000312" key="8">
    <source>
        <dbReference type="EMBL" id="AAM69350.1"/>
    </source>
</evidence>
<evidence type="ECO:0000312" key="9">
    <source>
        <dbReference type="EMBL" id="KAF4640093.1"/>
    </source>
</evidence>
<evidence type="ECO:0000312" key="10">
    <source>
        <dbReference type="Proteomes" id="UP000557509"/>
    </source>
</evidence>
<accession>Q8MUM2</accession>
<accession>B6KSE2</accession>
<accession>B9PZI1</accession>
<accession>B9QNB7</accession>
<accession>S7W5L6</accession>
<accession>S8EZG1</accession>
<organism evidence="8">
    <name type="scientific">Toxoplasma gondii</name>
    <dbReference type="NCBI Taxonomy" id="5811"/>
    <lineage>
        <taxon>Eukaryota</taxon>
        <taxon>Sar</taxon>
        <taxon>Alveolata</taxon>
        <taxon>Apicomplexa</taxon>
        <taxon>Conoidasida</taxon>
        <taxon>Coccidia</taxon>
        <taxon>Eucoccidiorida</taxon>
        <taxon>Eimeriorina</taxon>
        <taxon>Sarcocystidae</taxon>
        <taxon>Toxoplasma</taxon>
    </lineage>
</organism>
<comment type="function">
    <text evidence="1 3 4">Sodium-independent facilitative hexose transporter (By similarity). Can transport D-glucose and D-mannose with high affinity, and D-fructose and D-galactose with low affinity (PubMed:12238947, PubMed:19617561). Can transport D-xylose and D-glucosamine (By similarity).</text>
</comment>
<comment type="catalytic activity">
    <reaction evidence="3 4">
        <text>D-glucose(out) = D-glucose(in)</text>
        <dbReference type="Rhea" id="RHEA:60376"/>
        <dbReference type="ChEBI" id="CHEBI:4167"/>
    </reaction>
    <physiologicalReaction direction="left-to-right" evidence="7">
        <dbReference type="Rhea" id="RHEA:60377"/>
    </physiologicalReaction>
</comment>
<comment type="catalytic activity">
    <reaction evidence="3 4">
        <text>D-fructose(out) = D-fructose(in)</text>
        <dbReference type="Rhea" id="RHEA:60372"/>
        <dbReference type="ChEBI" id="CHEBI:37721"/>
    </reaction>
    <physiologicalReaction direction="left-to-right" evidence="7">
        <dbReference type="Rhea" id="RHEA:60373"/>
    </physiologicalReaction>
</comment>
<comment type="catalytic activity">
    <reaction evidence="4">
        <text>D-galactose(in) = D-galactose(out)</text>
        <dbReference type="Rhea" id="RHEA:34915"/>
        <dbReference type="ChEBI" id="CHEBI:4139"/>
    </reaction>
    <physiologicalReaction direction="right-to-left" evidence="7">
        <dbReference type="Rhea" id="RHEA:34917"/>
    </physiologicalReaction>
</comment>
<comment type="catalytic activity">
    <reaction evidence="4">
        <text>D-mannose(out) = D-mannose(in)</text>
        <dbReference type="Rhea" id="RHEA:78391"/>
        <dbReference type="ChEBI" id="CHEBI:4208"/>
    </reaction>
    <physiologicalReaction direction="left-to-right" evidence="7">
        <dbReference type="Rhea" id="RHEA:78392"/>
    </physiologicalReaction>
</comment>
<comment type="catalytic activity">
    <reaction evidence="1">
        <text>D-glucosamine(out) = D-glucosamine(in)</text>
        <dbReference type="Rhea" id="RHEA:78423"/>
        <dbReference type="ChEBI" id="CHEBI:58723"/>
    </reaction>
    <physiologicalReaction direction="left-to-right" evidence="7">
        <dbReference type="Rhea" id="RHEA:78424"/>
    </physiologicalReaction>
</comment>
<comment type="catalytic activity">
    <reaction evidence="1">
        <text>D-xylose(out) = D-xylose(in)</text>
        <dbReference type="Rhea" id="RHEA:78427"/>
        <dbReference type="ChEBI" id="CHEBI:53455"/>
    </reaction>
    <physiologicalReaction direction="left-to-right" evidence="7">
        <dbReference type="Rhea" id="RHEA:78428"/>
    </physiologicalReaction>
</comment>
<comment type="activity regulation">
    <text evidence="3">Inhibited by cytochalasin B.</text>
</comment>
<comment type="biophysicochemical properties">
    <kinetics>
        <KM evidence="3">0.03 mM for D-glucose</KM>
    </kinetics>
    <temperatureDependence>
        <text evidence="3">Active from 32 to 42 degrees Celsius with D-glucose as substrate (PubMed:12238947). Optimum temperature is above 37 degrees Celsius with D-fructose as substrate (PubMed:12238947). Loses activity at 24 degrees Celsius with D-fructose as substrate (PubMed:12238947).</text>
    </temperatureDependence>
</comment>
<comment type="subunit">
    <text evidence="1">Homodimer.</text>
</comment>
<comment type="subcellular location">
    <subcellularLocation>
        <location evidence="4">Cell membrane</location>
        <topology evidence="2">Multi-pass membrane protein</topology>
    </subcellularLocation>
</comment>
<comment type="disruption phenotype">
    <text evidence="4">Reduced growth rates (PubMed:19617561). Attenuated glucose uptake (PubMed:19617561). Reduced parasite motility in minimal media that does not contain glucose (PubMed:19617561). No significant effects on parasite motility in minimal media supplemented with glutamine (PubMed:19617561). No significant effects on virulence in mice (PubMed:19617561).</text>
</comment>
<comment type="miscellaneous">
    <text evidence="3">Experiments with hexose analogs indicate that hydroxyl groups in the C-3 and C-4 positions in glucose are important for high affinity interactions with HT1.</text>
</comment>
<comment type="similarity">
    <text evidence="7">Belongs to the major facilitator superfamily. Sugar transporter (TC 2.A.1.1) family.</text>
</comment>